<sequence>MLHVNFTEEESLNTQALIVFIDDKLKLDSELINLDQQHHGLISKTIANKLQFTGKYGQIKIIPSVVKSGEVKYLVLAGLGSEEKLTEVKIEELGGKILQNVTNAKIATIGLKIKNRISNFTSSHVASLIASGALLASYRFDKYRTTLKEADKFVVESFEISTDNNAEATKLFEVKKLIAEGVFFTRDISNEPSNIKTPQIYAERIADILEELNVDVSILGEREMKNLGMGALLGVGQGSQNESKLVVMEYQGANKDAPYIALVGKGVIFDTGGISLKPSNNMHLMRYDMCGSAAVVGTMIAVASQELPVNIVGVVGLVENMPSGNAQRPGDVVTTMSGQTAEVLNTDAEGRLVLADAVWYAQEKFKPKCVIDVATLTGAIVVSLGPTYAGCFSNNDELADKLIKAGEEVNEKLWRMPLHEDYDAMINSDIADMANIGNVPGAAGSSTAAHFIKRFIQEGVEWAHLDIAGVANSNKPSSLGPKGAVGYGVRLLEKFIKENYEQ</sequence>
<reference key="1">
    <citation type="journal article" date="2006" name="PLoS Genet.">
        <title>Genome sequence of Rickettsia bellii illuminates the role of amoebae in gene exchanges between intracellular pathogens.</title>
        <authorList>
            <person name="Ogata H."/>
            <person name="La Scola B."/>
            <person name="Audic S."/>
            <person name="Renesto P."/>
            <person name="Blanc G."/>
            <person name="Robert C."/>
            <person name="Fournier P.-E."/>
            <person name="Claverie J.-M."/>
            <person name="Raoult D."/>
        </authorList>
    </citation>
    <scope>NUCLEOTIDE SEQUENCE [LARGE SCALE GENOMIC DNA]</scope>
    <source>
        <strain>RML369-C</strain>
    </source>
</reference>
<keyword id="KW-0031">Aminopeptidase</keyword>
<keyword id="KW-0963">Cytoplasm</keyword>
<keyword id="KW-0378">Hydrolase</keyword>
<keyword id="KW-0464">Manganese</keyword>
<keyword id="KW-0479">Metal-binding</keyword>
<keyword id="KW-0645">Protease</keyword>
<organism>
    <name type="scientific">Rickettsia bellii (strain RML369-C)</name>
    <dbReference type="NCBI Taxonomy" id="336407"/>
    <lineage>
        <taxon>Bacteria</taxon>
        <taxon>Pseudomonadati</taxon>
        <taxon>Pseudomonadota</taxon>
        <taxon>Alphaproteobacteria</taxon>
        <taxon>Rickettsiales</taxon>
        <taxon>Rickettsiaceae</taxon>
        <taxon>Rickettsieae</taxon>
        <taxon>Rickettsia</taxon>
        <taxon>belli group</taxon>
    </lineage>
</organism>
<protein>
    <recommendedName>
        <fullName evidence="1">Probable cytosol aminopeptidase</fullName>
        <ecNumber evidence="1">3.4.11.1</ecNumber>
    </recommendedName>
    <alternativeName>
        <fullName evidence="1">Leucine aminopeptidase</fullName>
        <shortName evidence="1">LAP</shortName>
        <ecNumber evidence="1">3.4.11.10</ecNumber>
    </alternativeName>
    <alternativeName>
        <fullName evidence="1">Leucyl aminopeptidase</fullName>
    </alternativeName>
</protein>
<comment type="function">
    <text evidence="1">Presumably involved in the processing and regular turnover of intracellular proteins. Catalyzes the removal of unsubstituted N-terminal amino acids from various peptides.</text>
</comment>
<comment type="catalytic activity">
    <reaction evidence="1">
        <text>Release of an N-terminal amino acid, Xaa-|-Yaa-, in which Xaa is preferably Leu, but may be other amino acids including Pro although not Arg or Lys, and Yaa may be Pro. Amino acid amides and methyl esters are also readily hydrolyzed, but rates on arylamides are exceedingly low.</text>
        <dbReference type="EC" id="3.4.11.1"/>
    </reaction>
</comment>
<comment type="catalytic activity">
    <reaction evidence="1">
        <text>Release of an N-terminal amino acid, preferentially leucine, but not glutamic or aspartic acids.</text>
        <dbReference type="EC" id="3.4.11.10"/>
    </reaction>
</comment>
<comment type="cofactor">
    <cofactor evidence="1">
        <name>Mn(2+)</name>
        <dbReference type="ChEBI" id="CHEBI:29035"/>
    </cofactor>
    <text evidence="1">Binds 2 manganese ions per subunit.</text>
</comment>
<comment type="subcellular location">
    <subcellularLocation>
        <location evidence="1">Cytoplasm</location>
    </subcellularLocation>
</comment>
<comment type="similarity">
    <text evidence="1">Belongs to the peptidase M17 family.</text>
</comment>
<feature type="chain" id="PRO_0000277976" description="Probable cytosol aminopeptidase">
    <location>
        <begin position="1"/>
        <end position="502"/>
    </location>
</feature>
<feature type="active site" evidence="1">
    <location>
        <position position="277"/>
    </location>
</feature>
<feature type="active site" evidence="1">
    <location>
        <position position="351"/>
    </location>
</feature>
<feature type="binding site" evidence="1">
    <location>
        <position position="265"/>
    </location>
    <ligand>
        <name>Mn(2+)</name>
        <dbReference type="ChEBI" id="CHEBI:29035"/>
        <label>2</label>
    </ligand>
</feature>
<feature type="binding site" evidence="1">
    <location>
        <position position="270"/>
    </location>
    <ligand>
        <name>Mn(2+)</name>
        <dbReference type="ChEBI" id="CHEBI:29035"/>
        <label>1</label>
    </ligand>
</feature>
<feature type="binding site" evidence="1">
    <location>
        <position position="270"/>
    </location>
    <ligand>
        <name>Mn(2+)</name>
        <dbReference type="ChEBI" id="CHEBI:29035"/>
        <label>2</label>
    </ligand>
</feature>
<feature type="binding site" evidence="1">
    <location>
        <position position="288"/>
    </location>
    <ligand>
        <name>Mn(2+)</name>
        <dbReference type="ChEBI" id="CHEBI:29035"/>
        <label>2</label>
    </ligand>
</feature>
<feature type="binding site" evidence="1">
    <location>
        <position position="347"/>
    </location>
    <ligand>
        <name>Mn(2+)</name>
        <dbReference type="ChEBI" id="CHEBI:29035"/>
        <label>1</label>
    </ligand>
</feature>
<feature type="binding site" evidence="1">
    <location>
        <position position="349"/>
    </location>
    <ligand>
        <name>Mn(2+)</name>
        <dbReference type="ChEBI" id="CHEBI:29035"/>
        <label>1</label>
    </ligand>
</feature>
<feature type="binding site" evidence="1">
    <location>
        <position position="349"/>
    </location>
    <ligand>
        <name>Mn(2+)</name>
        <dbReference type="ChEBI" id="CHEBI:29035"/>
        <label>2</label>
    </ligand>
</feature>
<proteinExistence type="inferred from homology"/>
<evidence type="ECO:0000255" key="1">
    <source>
        <dbReference type="HAMAP-Rule" id="MF_00181"/>
    </source>
</evidence>
<dbReference type="EC" id="3.4.11.1" evidence="1"/>
<dbReference type="EC" id="3.4.11.10" evidence="1"/>
<dbReference type="EMBL" id="CP000087">
    <property type="protein sequence ID" value="ABE04432.1"/>
    <property type="molecule type" value="Genomic_DNA"/>
</dbReference>
<dbReference type="RefSeq" id="WP_011477041.1">
    <property type="nucleotide sequence ID" value="NC_007940.1"/>
</dbReference>
<dbReference type="SMR" id="Q1RJN2"/>
<dbReference type="KEGG" id="rbe:RBE_0351"/>
<dbReference type="eggNOG" id="COG0260">
    <property type="taxonomic scope" value="Bacteria"/>
</dbReference>
<dbReference type="HOGENOM" id="CLU_013734_6_0_5"/>
<dbReference type="OrthoDB" id="9809354at2"/>
<dbReference type="Proteomes" id="UP000001951">
    <property type="component" value="Chromosome"/>
</dbReference>
<dbReference type="GO" id="GO:0005737">
    <property type="term" value="C:cytoplasm"/>
    <property type="evidence" value="ECO:0007669"/>
    <property type="project" value="UniProtKB-SubCell"/>
</dbReference>
<dbReference type="GO" id="GO:0030145">
    <property type="term" value="F:manganese ion binding"/>
    <property type="evidence" value="ECO:0007669"/>
    <property type="project" value="UniProtKB-UniRule"/>
</dbReference>
<dbReference type="GO" id="GO:0070006">
    <property type="term" value="F:metalloaminopeptidase activity"/>
    <property type="evidence" value="ECO:0007669"/>
    <property type="project" value="InterPro"/>
</dbReference>
<dbReference type="GO" id="GO:0006508">
    <property type="term" value="P:proteolysis"/>
    <property type="evidence" value="ECO:0007669"/>
    <property type="project" value="UniProtKB-KW"/>
</dbReference>
<dbReference type="CDD" id="cd00433">
    <property type="entry name" value="Peptidase_M17"/>
    <property type="match status" value="1"/>
</dbReference>
<dbReference type="Gene3D" id="3.40.220.10">
    <property type="entry name" value="Leucine Aminopeptidase, subunit E, domain 1"/>
    <property type="match status" value="1"/>
</dbReference>
<dbReference type="Gene3D" id="3.40.630.10">
    <property type="entry name" value="Zn peptidases"/>
    <property type="match status" value="1"/>
</dbReference>
<dbReference type="HAMAP" id="MF_00181">
    <property type="entry name" value="Cytosol_peptidase_M17"/>
    <property type="match status" value="1"/>
</dbReference>
<dbReference type="InterPro" id="IPR011356">
    <property type="entry name" value="Leucine_aapep/pepB"/>
</dbReference>
<dbReference type="InterPro" id="IPR043472">
    <property type="entry name" value="Macro_dom-like"/>
</dbReference>
<dbReference type="InterPro" id="IPR000819">
    <property type="entry name" value="Peptidase_M17_C"/>
</dbReference>
<dbReference type="InterPro" id="IPR023042">
    <property type="entry name" value="Peptidase_M17_leu_NH2_pept"/>
</dbReference>
<dbReference type="InterPro" id="IPR008283">
    <property type="entry name" value="Peptidase_M17_N"/>
</dbReference>
<dbReference type="NCBIfam" id="NF002073">
    <property type="entry name" value="PRK00913.1-2"/>
    <property type="match status" value="1"/>
</dbReference>
<dbReference type="NCBIfam" id="NF002074">
    <property type="entry name" value="PRK00913.1-4"/>
    <property type="match status" value="1"/>
</dbReference>
<dbReference type="NCBIfam" id="NF002075">
    <property type="entry name" value="PRK00913.2-2"/>
    <property type="match status" value="1"/>
</dbReference>
<dbReference type="NCBIfam" id="NF002077">
    <property type="entry name" value="PRK00913.2-4"/>
    <property type="match status" value="1"/>
</dbReference>
<dbReference type="NCBIfam" id="NF002083">
    <property type="entry name" value="PRK00913.3-5"/>
    <property type="match status" value="1"/>
</dbReference>
<dbReference type="PANTHER" id="PTHR11963:SF23">
    <property type="entry name" value="CYTOSOL AMINOPEPTIDASE"/>
    <property type="match status" value="1"/>
</dbReference>
<dbReference type="PANTHER" id="PTHR11963">
    <property type="entry name" value="LEUCINE AMINOPEPTIDASE-RELATED"/>
    <property type="match status" value="1"/>
</dbReference>
<dbReference type="Pfam" id="PF00883">
    <property type="entry name" value="Peptidase_M17"/>
    <property type="match status" value="1"/>
</dbReference>
<dbReference type="Pfam" id="PF02789">
    <property type="entry name" value="Peptidase_M17_N"/>
    <property type="match status" value="1"/>
</dbReference>
<dbReference type="PRINTS" id="PR00481">
    <property type="entry name" value="LAMNOPPTDASE"/>
</dbReference>
<dbReference type="SUPFAM" id="SSF52949">
    <property type="entry name" value="Macro domain-like"/>
    <property type="match status" value="1"/>
</dbReference>
<dbReference type="SUPFAM" id="SSF53187">
    <property type="entry name" value="Zn-dependent exopeptidases"/>
    <property type="match status" value="1"/>
</dbReference>
<dbReference type="PROSITE" id="PS00631">
    <property type="entry name" value="CYTOSOL_AP"/>
    <property type="match status" value="1"/>
</dbReference>
<name>AMPA_RICBR</name>
<gene>
    <name evidence="1" type="primary">pepA</name>
    <name type="ordered locus">RBE_0351</name>
</gene>
<accession>Q1RJN2</accession>